<proteinExistence type="inferred from homology"/>
<accession>Q4L7Z5</accession>
<feature type="chain" id="PRO_0000213017" description="UPF0340 protein SH0921">
    <location>
        <begin position="1"/>
        <end position="174"/>
    </location>
</feature>
<gene>
    <name type="ordered locus">SH0921</name>
</gene>
<comment type="similarity">
    <text evidence="1">Belongs to the UPF0340 family.</text>
</comment>
<sequence length="174" mass="19015">MQELKTLLDELKSQSFFNENEICVIGCSTSEVIGQKIGSVGSMEVAEAIFNALEEVKQDTGVSFAFQGCEHINRAVTIEREDFNPLTMEEVTVVPDVHAGGSLATYAYKHMNDPIVVEHISVPKGIDIGQTLIGMHIKHICVPVRTSVKQVGEAIVTIATSRPKKIGGERAKYE</sequence>
<dbReference type="EMBL" id="AP006716">
    <property type="protein sequence ID" value="BAE04230.1"/>
    <property type="molecule type" value="Genomic_DNA"/>
</dbReference>
<dbReference type="RefSeq" id="WP_011275232.1">
    <property type="nucleotide sequence ID" value="NC_007168.1"/>
</dbReference>
<dbReference type="SMR" id="Q4L7Z5"/>
<dbReference type="KEGG" id="sha:SH0921"/>
<dbReference type="eggNOG" id="COG4475">
    <property type="taxonomic scope" value="Bacteria"/>
</dbReference>
<dbReference type="HOGENOM" id="CLU_106658_0_0_9"/>
<dbReference type="OrthoDB" id="9803187at2"/>
<dbReference type="Proteomes" id="UP000000543">
    <property type="component" value="Chromosome"/>
</dbReference>
<dbReference type="Gene3D" id="3.40.50.10360">
    <property type="entry name" value="Hypothetical protein TT1679"/>
    <property type="match status" value="1"/>
</dbReference>
<dbReference type="HAMAP" id="MF_00800">
    <property type="entry name" value="UPF0340"/>
    <property type="match status" value="1"/>
</dbReference>
<dbReference type="InterPro" id="IPR028345">
    <property type="entry name" value="Antibiotic_NAT-like"/>
</dbReference>
<dbReference type="InterPro" id="IPR006340">
    <property type="entry name" value="DUF436"/>
</dbReference>
<dbReference type="NCBIfam" id="TIGR01440">
    <property type="entry name" value="TIGR01440 family protein"/>
    <property type="match status" value="1"/>
</dbReference>
<dbReference type="Pfam" id="PF04260">
    <property type="entry name" value="DUF436"/>
    <property type="match status" value="1"/>
</dbReference>
<dbReference type="PIRSF" id="PIRSF007510">
    <property type="entry name" value="UCP007510"/>
    <property type="match status" value="1"/>
</dbReference>
<dbReference type="SUPFAM" id="SSF110710">
    <property type="entry name" value="TTHA0583/YokD-like"/>
    <property type="match status" value="1"/>
</dbReference>
<organism>
    <name type="scientific">Staphylococcus haemolyticus (strain JCSC1435)</name>
    <dbReference type="NCBI Taxonomy" id="279808"/>
    <lineage>
        <taxon>Bacteria</taxon>
        <taxon>Bacillati</taxon>
        <taxon>Bacillota</taxon>
        <taxon>Bacilli</taxon>
        <taxon>Bacillales</taxon>
        <taxon>Staphylococcaceae</taxon>
        <taxon>Staphylococcus</taxon>
    </lineage>
</organism>
<evidence type="ECO:0000255" key="1">
    <source>
        <dbReference type="HAMAP-Rule" id="MF_00800"/>
    </source>
</evidence>
<name>Y921_STAHJ</name>
<reference key="1">
    <citation type="journal article" date="2005" name="J. Bacteriol.">
        <title>Whole-genome sequencing of Staphylococcus haemolyticus uncovers the extreme plasticity of its genome and the evolution of human-colonizing staphylococcal species.</title>
        <authorList>
            <person name="Takeuchi F."/>
            <person name="Watanabe S."/>
            <person name="Baba T."/>
            <person name="Yuzawa H."/>
            <person name="Ito T."/>
            <person name="Morimoto Y."/>
            <person name="Kuroda M."/>
            <person name="Cui L."/>
            <person name="Takahashi M."/>
            <person name="Ankai A."/>
            <person name="Baba S."/>
            <person name="Fukui S."/>
            <person name="Lee J.C."/>
            <person name="Hiramatsu K."/>
        </authorList>
    </citation>
    <scope>NUCLEOTIDE SEQUENCE [LARGE SCALE GENOMIC DNA]</scope>
    <source>
        <strain>JCSC1435</strain>
    </source>
</reference>
<protein>
    <recommendedName>
        <fullName evidence="1">UPF0340 protein SH0921</fullName>
    </recommendedName>
</protein>